<name>Y1308_RICM5</name>
<feature type="signal peptide" evidence="1">
    <location>
        <begin position="1"/>
        <end position="22"/>
    </location>
</feature>
<feature type="chain" id="PRO_0000317025" description="Putative adhesin RMA_1308">
    <location>
        <begin position="23"/>
        <end position="224"/>
    </location>
</feature>
<evidence type="ECO:0000255" key="1"/>
<evidence type="ECO:0000305" key="2"/>
<dbReference type="EMBL" id="CP000683">
    <property type="protein sequence ID" value="ABV85253.1"/>
    <property type="status" value="ALT_INIT"/>
    <property type="molecule type" value="Genomic_DNA"/>
</dbReference>
<dbReference type="RefSeq" id="WP_041404894.1">
    <property type="nucleotide sequence ID" value="NC_009900.1"/>
</dbReference>
<dbReference type="KEGG" id="rms:RMA_1308"/>
<dbReference type="HOGENOM" id="CLU_1146500_0_0_5"/>
<dbReference type="Proteomes" id="UP000001311">
    <property type="component" value="Chromosome"/>
</dbReference>
<dbReference type="GO" id="GO:0009279">
    <property type="term" value="C:cell outer membrane"/>
    <property type="evidence" value="ECO:0007669"/>
    <property type="project" value="InterPro"/>
</dbReference>
<dbReference type="Gene3D" id="2.40.160.20">
    <property type="match status" value="1"/>
</dbReference>
<dbReference type="InterPro" id="IPR011250">
    <property type="entry name" value="OMP/PagP_b-brl"/>
</dbReference>
<dbReference type="InterPro" id="IPR000498">
    <property type="entry name" value="OmpA-like_TM_dom"/>
</dbReference>
<dbReference type="Pfam" id="PF01389">
    <property type="entry name" value="OmpA_membrane"/>
    <property type="match status" value="1"/>
</dbReference>
<dbReference type="SUPFAM" id="SSF56925">
    <property type="entry name" value="OMPA-like"/>
    <property type="match status" value="1"/>
</dbReference>
<protein>
    <recommendedName>
        <fullName>Putative adhesin RMA_1308</fullName>
    </recommendedName>
</protein>
<organism>
    <name type="scientific">Rickettsia massiliae (strain Mtu5)</name>
    <dbReference type="NCBI Taxonomy" id="416276"/>
    <lineage>
        <taxon>Bacteria</taxon>
        <taxon>Pseudomonadati</taxon>
        <taxon>Pseudomonadota</taxon>
        <taxon>Alphaproteobacteria</taxon>
        <taxon>Rickettsiales</taxon>
        <taxon>Rickettsiaceae</taxon>
        <taxon>Rickettsieae</taxon>
        <taxon>Rickettsia</taxon>
        <taxon>spotted fever group</taxon>
    </lineage>
</organism>
<comment type="sequence caution" evidence="2">
    <conflict type="erroneous initiation">
        <sequence resource="EMBL-CDS" id="ABV85253"/>
    </conflict>
</comment>
<proteinExistence type="inferred from homology"/>
<reference key="1">
    <citation type="journal article" date="2007" name="Genome Res.">
        <title>Lateral gene transfer between obligate intracellular bacteria: evidence from the Rickettsia massiliae genome.</title>
        <authorList>
            <person name="Blanc G."/>
            <person name="Ogata H."/>
            <person name="Robert C."/>
            <person name="Audic S."/>
            <person name="Claverie J.-M."/>
            <person name="Raoult D."/>
        </authorList>
    </citation>
    <scope>NUCLEOTIDE SEQUENCE [LARGE SCALE GENOMIC DNA]</scope>
    <source>
        <strain>Mtu5</strain>
    </source>
</reference>
<accession>A8F2W7</accession>
<gene>
    <name type="ordered locus">RMA_1308</name>
</gene>
<sequence length="224" mass="23949">MQKLLLIAATSATILSSSLSFAEGMDNEWYLRIDTGAAMFNEEKDKATGVKLKSNTTVPVDLGIGYYISENCRADLTLGTIIGGKLKKSGAATNAPFTGTNVSASHKPTITRLLINGYVDLTNFDMFDVFAGAGVGPALVKEKITYNGITGLSSNTKNRTNISYKLTLGTSAQIADGVKVELAYSWIDDGRTKSKNVIYPGTSVPTGGMRYQSHNLTAGIRFDI</sequence>
<keyword id="KW-0732">Signal</keyword>